<sequence length="269" mass="30733">MANYIVGDIQGCFDELMLLLAQCQFDKNVDTLWVAGDLVARGPKSLETLRFIKSLGDSAKVVLGNHDLHLIAVSLGIRNNKAKDKTAPIFASEDGNELLHWLRQQPLLAEHPKFVVCHAGISPQWDLATARLCAEEVESLLRSENYRWLIENMYCNQPDLWQDNLSGLDRYRYIINAFTRMRFCFADGRLDMDCKLPPSEVKESELMPWFTLPQRRALDKPVLFGHWAALEGYISEEVIGLDTGCVWNGSLTMIRWEDKQVFSQKALEN</sequence>
<proteinExistence type="inferred from homology"/>
<dbReference type="EC" id="3.6.1.41" evidence="1"/>
<dbReference type="EMBL" id="BA000037">
    <property type="protein sequence ID" value="BAC93240.1"/>
    <property type="molecule type" value="Genomic_DNA"/>
</dbReference>
<dbReference type="RefSeq" id="WP_011149396.1">
    <property type="nucleotide sequence ID" value="NC_005139.1"/>
</dbReference>
<dbReference type="SMR" id="Q7MP88"/>
<dbReference type="STRING" id="672.VV93_v1c04430"/>
<dbReference type="KEGG" id="vvy:VV0476"/>
<dbReference type="PATRIC" id="fig|196600.6.peg.502"/>
<dbReference type="eggNOG" id="COG0639">
    <property type="taxonomic scope" value="Bacteria"/>
</dbReference>
<dbReference type="HOGENOM" id="CLU_056184_2_0_6"/>
<dbReference type="Proteomes" id="UP000002675">
    <property type="component" value="Chromosome I"/>
</dbReference>
<dbReference type="GO" id="GO:0008803">
    <property type="term" value="F:bis(5'-nucleosyl)-tetraphosphatase (symmetrical) activity"/>
    <property type="evidence" value="ECO:0007669"/>
    <property type="project" value="UniProtKB-UniRule"/>
</dbReference>
<dbReference type="CDD" id="cd07422">
    <property type="entry name" value="MPP_ApaH"/>
    <property type="match status" value="1"/>
</dbReference>
<dbReference type="Gene3D" id="3.60.21.10">
    <property type="match status" value="1"/>
</dbReference>
<dbReference type="HAMAP" id="MF_00199">
    <property type="entry name" value="ApaH"/>
    <property type="match status" value="1"/>
</dbReference>
<dbReference type="InterPro" id="IPR004617">
    <property type="entry name" value="ApaH"/>
</dbReference>
<dbReference type="InterPro" id="IPR004843">
    <property type="entry name" value="Calcineurin-like_PHP_ApaH"/>
</dbReference>
<dbReference type="InterPro" id="IPR029052">
    <property type="entry name" value="Metallo-depent_PP-like"/>
</dbReference>
<dbReference type="NCBIfam" id="TIGR00668">
    <property type="entry name" value="apaH"/>
    <property type="match status" value="1"/>
</dbReference>
<dbReference type="NCBIfam" id="NF001204">
    <property type="entry name" value="PRK00166.1"/>
    <property type="match status" value="1"/>
</dbReference>
<dbReference type="PANTHER" id="PTHR40942">
    <property type="match status" value="1"/>
</dbReference>
<dbReference type="PANTHER" id="PTHR40942:SF4">
    <property type="entry name" value="CYTOCHROME C5"/>
    <property type="match status" value="1"/>
</dbReference>
<dbReference type="Pfam" id="PF00149">
    <property type="entry name" value="Metallophos"/>
    <property type="match status" value="1"/>
</dbReference>
<dbReference type="PIRSF" id="PIRSF000903">
    <property type="entry name" value="B5n-ttraPtase_sm"/>
    <property type="match status" value="1"/>
</dbReference>
<dbReference type="SUPFAM" id="SSF56300">
    <property type="entry name" value="Metallo-dependent phosphatases"/>
    <property type="match status" value="1"/>
</dbReference>
<evidence type="ECO:0000255" key="1">
    <source>
        <dbReference type="HAMAP-Rule" id="MF_00199"/>
    </source>
</evidence>
<feature type="chain" id="PRO_0000198015" description="Bis(5'-nucleosyl)-tetraphosphatase, symmetrical">
    <location>
        <begin position="1"/>
        <end position="269"/>
    </location>
</feature>
<reference key="1">
    <citation type="journal article" date="2003" name="Genome Res.">
        <title>Comparative genome analysis of Vibrio vulnificus, a marine pathogen.</title>
        <authorList>
            <person name="Chen C.-Y."/>
            <person name="Wu K.-M."/>
            <person name="Chang Y.-C."/>
            <person name="Chang C.-H."/>
            <person name="Tsai H.-C."/>
            <person name="Liao T.-L."/>
            <person name="Liu Y.-M."/>
            <person name="Chen H.-J."/>
            <person name="Shen A.B.-T."/>
            <person name="Li J.-C."/>
            <person name="Su T.-L."/>
            <person name="Shao C.-P."/>
            <person name="Lee C.-T."/>
            <person name="Hor L.-I."/>
            <person name="Tsai S.-F."/>
        </authorList>
    </citation>
    <scope>NUCLEOTIDE SEQUENCE [LARGE SCALE GENOMIC DNA]</scope>
    <source>
        <strain>YJ016</strain>
    </source>
</reference>
<keyword id="KW-0378">Hydrolase</keyword>
<name>APAH_VIBVY</name>
<gene>
    <name evidence="1" type="primary">apaH</name>
    <name type="ordered locus">VV0476</name>
</gene>
<protein>
    <recommendedName>
        <fullName evidence="1">Bis(5'-nucleosyl)-tetraphosphatase, symmetrical</fullName>
        <ecNumber evidence="1">3.6.1.41</ecNumber>
    </recommendedName>
    <alternativeName>
        <fullName evidence="1">Ap4A hydrolase</fullName>
    </alternativeName>
    <alternativeName>
        <fullName evidence="1">Diadenosine 5',5'''-P1,P4-tetraphosphate pyrophosphohydrolase</fullName>
    </alternativeName>
    <alternativeName>
        <fullName evidence="1">Diadenosine tetraphosphatase</fullName>
    </alternativeName>
</protein>
<comment type="function">
    <text evidence="1">Hydrolyzes diadenosine 5',5'''-P1,P4-tetraphosphate to yield ADP.</text>
</comment>
<comment type="catalytic activity">
    <reaction evidence="1">
        <text>P(1),P(4)-bis(5'-adenosyl) tetraphosphate + H2O = 2 ADP + 2 H(+)</text>
        <dbReference type="Rhea" id="RHEA:24252"/>
        <dbReference type="ChEBI" id="CHEBI:15377"/>
        <dbReference type="ChEBI" id="CHEBI:15378"/>
        <dbReference type="ChEBI" id="CHEBI:58141"/>
        <dbReference type="ChEBI" id="CHEBI:456216"/>
        <dbReference type="EC" id="3.6.1.41"/>
    </reaction>
</comment>
<comment type="similarity">
    <text evidence="1">Belongs to the Ap4A hydrolase family.</text>
</comment>
<accession>Q7MP88</accession>
<organism>
    <name type="scientific">Vibrio vulnificus (strain YJ016)</name>
    <dbReference type="NCBI Taxonomy" id="196600"/>
    <lineage>
        <taxon>Bacteria</taxon>
        <taxon>Pseudomonadati</taxon>
        <taxon>Pseudomonadota</taxon>
        <taxon>Gammaproteobacteria</taxon>
        <taxon>Vibrionales</taxon>
        <taxon>Vibrionaceae</taxon>
        <taxon>Vibrio</taxon>
    </lineage>
</organism>